<organism>
    <name type="scientific">Invertebrate iridescent virus 6</name>
    <name type="common">IIV-6</name>
    <name type="synonym">Chilo iridescent virus</name>
    <dbReference type="NCBI Taxonomy" id="176652"/>
    <lineage>
        <taxon>Viruses</taxon>
        <taxon>Varidnaviria</taxon>
        <taxon>Bamfordvirae</taxon>
        <taxon>Nucleocytoviricota</taxon>
        <taxon>Megaviricetes</taxon>
        <taxon>Pimascovirales</taxon>
        <taxon>Iridoviridae</taxon>
        <taxon>Betairidovirinae</taxon>
        <taxon>Iridovirus</taxon>
    </lineage>
</organism>
<sequence>MEPTKIVENLYLGNIQNGIRHSNYGFDKIINLTRFNNQYGIPTVWINIDDSESSDLYSHLQKVTTLIHDSIENGNKVLVHCQAGISRSATVVIAYIMRSKRYSLQDAFNFVKKKRSIIFPNAGFIKQLAQFERWLNSTNSYF</sequence>
<organismHost>
    <name type="scientific">Acheta domesticus</name>
    <name type="common">House cricket</name>
    <dbReference type="NCBI Taxonomy" id="6997"/>
</organismHost>
<organismHost>
    <name type="scientific">Chilo suppressalis</name>
    <name type="common">Asiatic rice borer moth</name>
    <dbReference type="NCBI Taxonomy" id="168631"/>
</organismHost>
<organismHost>
    <name type="scientific">Gryllus bimaculatus</name>
    <name type="common">Two-spotted cricket</name>
    <dbReference type="NCBI Taxonomy" id="6999"/>
</organismHost>
<organismHost>
    <name type="scientific">Gryllus campestris</name>
    <dbReference type="NCBI Taxonomy" id="58607"/>
</organismHost>
<organismHost>
    <name type="scientific">Spodoptera frugiperda</name>
    <name type="common">Fall armyworm</name>
    <dbReference type="NCBI Taxonomy" id="7108"/>
</organismHost>
<proteinExistence type="inferred from homology"/>
<accession>O55737</accession>
<feature type="chain" id="PRO_0000377911" description="Putative tyrosine phosphatase 123R">
    <location>
        <begin position="1"/>
        <end position="142"/>
    </location>
</feature>
<feature type="domain" description="Tyrosine-protein phosphatase" evidence="1">
    <location>
        <begin position="2"/>
        <end position="137"/>
    </location>
</feature>
<feature type="active site" description="Phosphocysteine intermediate" evidence="1">
    <location>
        <position position="81"/>
    </location>
</feature>
<comment type="similarity">
    <text evidence="2">Belongs to the protein-tyrosine phosphatase family.</text>
</comment>
<name>123R_IIV6</name>
<gene>
    <name type="ORF">IIV6-123R</name>
</gene>
<evidence type="ECO:0000255" key="1">
    <source>
        <dbReference type="PROSITE-ProRule" id="PRU00160"/>
    </source>
</evidence>
<evidence type="ECO:0000305" key="2"/>
<protein>
    <recommendedName>
        <fullName>Putative tyrosine phosphatase 123R</fullName>
        <ecNumber>3.1.3.-</ecNumber>
    </recommendedName>
</protein>
<dbReference type="EC" id="3.1.3.-"/>
<dbReference type="EMBL" id="AF303741">
    <property type="protein sequence ID" value="AAB94448.1"/>
    <property type="molecule type" value="Genomic_DNA"/>
</dbReference>
<dbReference type="PIR" id="T03074">
    <property type="entry name" value="T03074"/>
</dbReference>
<dbReference type="RefSeq" id="NP_149586.1">
    <property type="nucleotide sequence ID" value="NC_003038.1"/>
</dbReference>
<dbReference type="SMR" id="O55737"/>
<dbReference type="KEGG" id="vg:1733121"/>
<dbReference type="OrthoDB" id="12612at10239"/>
<dbReference type="Proteomes" id="UP000001359">
    <property type="component" value="Genome"/>
</dbReference>
<dbReference type="GO" id="GO:0033550">
    <property type="term" value="F:MAP kinase tyrosine phosphatase activity"/>
    <property type="evidence" value="ECO:0007669"/>
    <property type="project" value="TreeGrafter"/>
</dbReference>
<dbReference type="GO" id="GO:0017017">
    <property type="term" value="F:MAP kinase tyrosine/serine/threonine phosphatase activity"/>
    <property type="evidence" value="ECO:0007669"/>
    <property type="project" value="TreeGrafter"/>
</dbReference>
<dbReference type="GO" id="GO:0008330">
    <property type="term" value="F:protein tyrosine/threonine phosphatase activity"/>
    <property type="evidence" value="ECO:0007669"/>
    <property type="project" value="TreeGrafter"/>
</dbReference>
<dbReference type="GO" id="GO:0043409">
    <property type="term" value="P:negative regulation of MAPK cascade"/>
    <property type="evidence" value="ECO:0007669"/>
    <property type="project" value="TreeGrafter"/>
</dbReference>
<dbReference type="CDD" id="cd14498">
    <property type="entry name" value="DSP"/>
    <property type="match status" value="1"/>
</dbReference>
<dbReference type="Gene3D" id="3.90.190.10">
    <property type="entry name" value="Protein tyrosine phosphatase superfamily"/>
    <property type="match status" value="1"/>
</dbReference>
<dbReference type="InterPro" id="IPR000340">
    <property type="entry name" value="Dual-sp_phosphatase_cat-dom"/>
</dbReference>
<dbReference type="InterPro" id="IPR029021">
    <property type="entry name" value="Prot-tyrosine_phosphatase-like"/>
</dbReference>
<dbReference type="InterPro" id="IPR016130">
    <property type="entry name" value="Tyr_Pase_AS"/>
</dbReference>
<dbReference type="InterPro" id="IPR000387">
    <property type="entry name" value="Tyr_Pase_dom"/>
</dbReference>
<dbReference type="InterPro" id="IPR020422">
    <property type="entry name" value="TYR_PHOSPHATASE_DUAL_dom"/>
</dbReference>
<dbReference type="PANTHER" id="PTHR10159">
    <property type="entry name" value="DUAL SPECIFICITY PROTEIN PHOSPHATASE"/>
    <property type="match status" value="1"/>
</dbReference>
<dbReference type="PANTHER" id="PTHR10159:SF519">
    <property type="entry name" value="DUAL SPECIFICITY PROTEIN PHOSPHATASE MPK3"/>
    <property type="match status" value="1"/>
</dbReference>
<dbReference type="Pfam" id="PF00782">
    <property type="entry name" value="DSPc"/>
    <property type="match status" value="1"/>
</dbReference>
<dbReference type="SMART" id="SM00195">
    <property type="entry name" value="DSPc"/>
    <property type="match status" value="1"/>
</dbReference>
<dbReference type="SUPFAM" id="SSF52799">
    <property type="entry name" value="(Phosphotyrosine protein) phosphatases II"/>
    <property type="match status" value="1"/>
</dbReference>
<dbReference type="PROSITE" id="PS00383">
    <property type="entry name" value="TYR_PHOSPHATASE_1"/>
    <property type="match status" value="1"/>
</dbReference>
<dbReference type="PROSITE" id="PS50056">
    <property type="entry name" value="TYR_PHOSPHATASE_2"/>
    <property type="match status" value="1"/>
</dbReference>
<dbReference type="PROSITE" id="PS50054">
    <property type="entry name" value="TYR_PHOSPHATASE_DUAL"/>
    <property type="match status" value="1"/>
</dbReference>
<keyword id="KW-0378">Hydrolase</keyword>
<keyword id="KW-0904">Protein phosphatase</keyword>
<keyword id="KW-1185">Reference proteome</keyword>
<reference key="1">
    <citation type="journal article" date="2001" name="Virology">
        <title>Analysis of the first complete DNA sequence of an invertebrate iridovirus: coding strategy of the genome of Chilo iridescent virus.</title>
        <authorList>
            <person name="Jakob N.J."/>
            <person name="Mueller K."/>
            <person name="Bahr U."/>
            <person name="Darai G."/>
        </authorList>
    </citation>
    <scope>NUCLEOTIDE SEQUENCE [LARGE SCALE GENOMIC DNA]</scope>
</reference>
<reference key="2">
    <citation type="journal article" date="2007" name="Virol. J.">
        <title>Comparative genomic analysis of the family Iridoviridae: re-annotating and defining the core set of iridovirus genes.</title>
        <authorList>
            <person name="Eaton H.E."/>
            <person name="Metcalf J."/>
            <person name="Penny E."/>
            <person name="Tcherepanov V."/>
            <person name="Upton C."/>
            <person name="Brunetti C.R."/>
        </authorList>
    </citation>
    <scope>GENOME REANNOTATION</scope>
</reference>